<accession>B7HK63</accession>
<organism>
    <name type="scientific">Bacillus cereus (strain AH187)</name>
    <dbReference type="NCBI Taxonomy" id="405534"/>
    <lineage>
        <taxon>Bacteria</taxon>
        <taxon>Bacillati</taxon>
        <taxon>Bacillota</taxon>
        <taxon>Bacilli</taxon>
        <taxon>Bacillales</taxon>
        <taxon>Bacillaceae</taxon>
        <taxon>Bacillus</taxon>
        <taxon>Bacillus cereus group</taxon>
    </lineage>
</organism>
<proteinExistence type="inferred from homology"/>
<name>QUEC_BACC7</name>
<comment type="function">
    <text evidence="1">Catalyzes the ATP-dependent conversion of 7-carboxy-7-deazaguanine (CDG) to 7-cyano-7-deazaguanine (preQ(0)).</text>
</comment>
<comment type="catalytic activity">
    <reaction evidence="1">
        <text>7-carboxy-7-deazaguanine + NH4(+) + ATP = 7-cyano-7-deazaguanine + ADP + phosphate + H2O + H(+)</text>
        <dbReference type="Rhea" id="RHEA:27982"/>
        <dbReference type="ChEBI" id="CHEBI:15377"/>
        <dbReference type="ChEBI" id="CHEBI:15378"/>
        <dbReference type="ChEBI" id="CHEBI:28938"/>
        <dbReference type="ChEBI" id="CHEBI:30616"/>
        <dbReference type="ChEBI" id="CHEBI:43474"/>
        <dbReference type="ChEBI" id="CHEBI:45075"/>
        <dbReference type="ChEBI" id="CHEBI:61036"/>
        <dbReference type="ChEBI" id="CHEBI:456216"/>
        <dbReference type="EC" id="6.3.4.20"/>
    </reaction>
</comment>
<comment type="cofactor">
    <cofactor evidence="1">
        <name>Zn(2+)</name>
        <dbReference type="ChEBI" id="CHEBI:29105"/>
    </cofactor>
    <text evidence="1">Binds 1 zinc ion per subunit.</text>
</comment>
<comment type="pathway">
    <text evidence="1">Purine metabolism; 7-cyano-7-deazaguanine biosynthesis.</text>
</comment>
<comment type="subunit">
    <text evidence="1">Homodimer.</text>
</comment>
<comment type="similarity">
    <text evidence="1">Belongs to the QueC family.</text>
</comment>
<dbReference type="EC" id="6.3.4.20" evidence="1"/>
<dbReference type="EMBL" id="CP001177">
    <property type="protein sequence ID" value="ACJ80127.1"/>
    <property type="molecule type" value="Genomic_DNA"/>
</dbReference>
<dbReference type="SMR" id="B7HK63"/>
<dbReference type="KEGG" id="bcr:BCAH187_A1497"/>
<dbReference type="HOGENOM" id="CLU_081854_0_0_9"/>
<dbReference type="UniPathway" id="UPA00391"/>
<dbReference type="Proteomes" id="UP000002214">
    <property type="component" value="Chromosome"/>
</dbReference>
<dbReference type="GO" id="GO:0005524">
    <property type="term" value="F:ATP binding"/>
    <property type="evidence" value="ECO:0007669"/>
    <property type="project" value="UniProtKB-UniRule"/>
</dbReference>
<dbReference type="GO" id="GO:0016879">
    <property type="term" value="F:ligase activity, forming carbon-nitrogen bonds"/>
    <property type="evidence" value="ECO:0007669"/>
    <property type="project" value="UniProtKB-UniRule"/>
</dbReference>
<dbReference type="GO" id="GO:0008270">
    <property type="term" value="F:zinc ion binding"/>
    <property type="evidence" value="ECO:0007669"/>
    <property type="project" value="UniProtKB-UniRule"/>
</dbReference>
<dbReference type="GO" id="GO:0008616">
    <property type="term" value="P:queuosine biosynthetic process"/>
    <property type="evidence" value="ECO:0007669"/>
    <property type="project" value="UniProtKB-UniRule"/>
</dbReference>
<dbReference type="CDD" id="cd01995">
    <property type="entry name" value="QueC-like"/>
    <property type="match status" value="1"/>
</dbReference>
<dbReference type="FunFam" id="3.40.50.620:FF:000017">
    <property type="entry name" value="7-cyano-7-deazaguanine synthase"/>
    <property type="match status" value="1"/>
</dbReference>
<dbReference type="Gene3D" id="3.40.50.620">
    <property type="entry name" value="HUPs"/>
    <property type="match status" value="1"/>
</dbReference>
<dbReference type="HAMAP" id="MF_01633">
    <property type="entry name" value="QueC"/>
    <property type="match status" value="1"/>
</dbReference>
<dbReference type="InterPro" id="IPR018317">
    <property type="entry name" value="QueC"/>
</dbReference>
<dbReference type="InterPro" id="IPR014729">
    <property type="entry name" value="Rossmann-like_a/b/a_fold"/>
</dbReference>
<dbReference type="NCBIfam" id="TIGR00364">
    <property type="entry name" value="7-cyano-7-deazaguanine synthase QueC"/>
    <property type="match status" value="1"/>
</dbReference>
<dbReference type="PANTHER" id="PTHR42914">
    <property type="entry name" value="7-CYANO-7-DEAZAGUANINE SYNTHASE"/>
    <property type="match status" value="1"/>
</dbReference>
<dbReference type="PANTHER" id="PTHR42914:SF1">
    <property type="entry name" value="7-CYANO-7-DEAZAGUANINE SYNTHASE"/>
    <property type="match status" value="1"/>
</dbReference>
<dbReference type="Pfam" id="PF06508">
    <property type="entry name" value="QueC"/>
    <property type="match status" value="1"/>
</dbReference>
<dbReference type="PIRSF" id="PIRSF006293">
    <property type="entry name" value="ExsB"/>
    <property type="match status" value="1"/>
</dbReference>
<dbReference type="SUPFAM" id="SSF52402">
    <property type="entry name" value="Adenine nucleotide alpha hydrolases-like"/>
    <property type="match status" value="1"/>
</dbReference>
<gene>
    <name evidence="1" type="primary">queC</name>
    <name type="ordered locus">BCAH187_A1497</name>
</gene>
<evidence type="ECO:0000255" key="1">
    <source>
        <dbReference type="HAMAP-Rule" id="MF_01633"/>
    </source>
</evidence>
<feature type="chain" id="PRO_1000186559" description="7-cyano-7-deazaguanine synthase">
    <location>
        <begin position="1"/>
        <end position="220"/>
    </location>
</feature>
<feature type="binding site" evidence="1">
    <location>
        <begin position="10"/>
        <end position="20"/>
    </location>
    <ligand>
        <name>ATP</name>
        <dbReference type="ChEBI" id="CHEBI:30616"/>
    </ligand>
</feature>
<feature type="binding site" evidence="1">
    <location>
        <position position="186"/>
    </location>
    <ligand>
        <name>Zn(2+)</name>
        <dbReference type="ChEBI" id="CHEBI:29105"/>
    </ligand>
</feature>
<feature type="binding site" evidence="1">
    <location>
        <position position="195"/>
    </location>
    <ligand>
        <name>Zn(2+)</name>
        <dbReference type="ChEBI" id="CHEBI:29105"/>
    </ligand>
</feature>
<feature type="binding site" evidence="1">
    <location>
        <position position="198"/>
    </location>
    <ligand>
        <name>Zn(2+)</name>
        <dbReference type="ChEBI" id="CHEBI:29105"/>
    </ligand>
</feature>
<feature type="binding site" evidence="1">
    <location>
        <position position="201"/>
    </location>
    <ligand>
        <name>Zn(2+)</name>
        <dbReference type="ChEBI" id="CHEBI:29105"/>
    </ligand>
</feature>
<protein>
    <recommendedName>
        <fullName evidence="1">7-cyano-7-deazaguanine synthase</fullName>
        <ecNumber evidence="1">6.3.4.20</ecNumber>
    </recommendedName>
    <alternativeName>
        <fullName evidence="1">7-cyano-7-carbaguanine synthase</fullName>
    </alternativeName>
    <alternativeName>
        <fullName evidence="1">PreQ(0) synthase</fullName>
    </alternativeName>
    <alternativeName>
        <fullName evidence="1">Queuosine biosynthesis protein QueC</fullName>
    </alternativeName>
</protein>
<keyword id="KW-0067">ATP-binding</keyword>
<keyword id="KW-0436">Ligase</keyword>
<keyword id="KW-0479">Metal-binding</keyword>
<keyword id="KW-0547">Nucleotide-binding</keyword>
<keyword id="KW-0671">Queuosine biosynthesis</keyword>
<keyword id="KW-0862">Zinc</keyword>
<sequence length="220" mass="24531">MKKEKAVVVFSGGQDSTTCLFWAMEQFAEVEAVTFNYNQRHKLEIDCAAEIAKELGIKHTVLDMSLLNQLAPNALTRTDMEITHEEGELPSTFVDGRNLLFLSFAAVLAKQVGARHIVTGVCETDFSGYPDCRDVFVKSLNVTLNLSMDYPFVIHTPLMWIDKAETWKLSDELGAFEFVREKTLTCYNGIIGDGCGECPACQLRKAGLDTYLQEREGASN</sequence>
<reference key="1">
    <citation type="submission" date="2008-10" db="EMBL/GenBank/DDBJ databases">
        <title>Genome sequence of Bacillus cereus AH187.</title>
        <authorList>
            <person name="Dodson R.J."/>
            <person name="Durkin A.S."/>
            <person name="Rosovitz M.J."/>
            <person name="Rasko D.A."/>
            <person name="Kolsto A.B."/>
            <person name="Okstad O.A."/>
            <person name="Ravel J."/>
            <person name="Sutton G."/>
        </authorList>
    </citation>
    <scope>NUCLEOTIDE SEQUENCE [LARGE SCALE GENOMIC DNA]</scope>
    <source>
        <strain>AH187</strain>
    </source>
</reference>